<name>TPIS_CHLFF</name>
<organism>
    <name type="scientific">Chlamydia felis (strain Fe/C-56)</name>
    <name type="common">Chlamydophila felis</name>
    <dbReference type="NCBI Taxonomy" id="264202"/>
    <lineage>
        <taxon>Bacteria</taxon>
        <taxon>Pseudomonadati</taxon>
        <taxon>Chlamydiota</taxon>
        <taxon>Chlamydiia</taxon>
        <taxon>Chlamydiales</taxon>
        <taxon>Chlamydiaceae</taxon>
        <taxon>Chlamydia/Chlamydophila group</taxon>
        <taxon>Chlamydia</taxon>
    </lineage>
</organism>
<proteinExistence type="inferred from homology"/>
<dbReference type="EC" id="5.3.1.1" evidence="1"/>
<dbReference type="EMBL" id="AP006861">
    <property type="protein sequence ID" value="BAE81467.1"/>
    <property type="molecule type" value="Genomic_DNA"/>
</dbReference>
<dbReference type="RefSeq" id="WP_011458245.1">
    <property type="nucleotide sequence ID" value="NC_007899.1"/>
</dbReference>
<dbReference type="SMR" id="Q253S1"/>
<dbReference type="STRING" id="264202.CF0695"/>
<dbReference type="KEGG" id="cfe:CF0695"/>
<dbReference type="eggNOG" id="COG0149">
    <property type="taxonomic scope" value="Bacteria"/>
</dbReference>
<dbReference type="HOGENOM" id="CLU_024251_2_3_0"/>
<dbReference type="OrthoDB" id="9809429at2"/>
<dbReference type="UniPathway" id="UPA00109">
    <property type="reaction ID" value="UER00189"/>
</dbReference>
<dbReference type="UniPathway" id="UPA00138"/>
<dbReference type="Proteomes" id="UP000001260">
    <property type="component" value="Chromosome"/>
</dbReference>
<dbReference type="GO" id="GO:0005829">
    <property type="term" value="C:cytosol"/>
    <property type="evidence" value="ECO:0007669"/>
    <property type="project" value="TreeGrafter"/>
</dbReference>
<dbReference type="GO" id="GO:0004807">
    <property type="term" value="F:triose-phosphate isomerase activity"/>
    <property type="evidence" value="ECO:0007669"/>
    <property type="project" value="UniProtKB-UniRule"/>
</dbReference>
<dbReference type="GO" id="GO:0006094">
    <property type="term" value="P:gluconeogenesis"/>
    <property type="evidence" value="ECO:0007669"/>
    <property type="project" value="UniProtKB-UniRule"/>
</dbReference>
<dbReference type="GO" id="GO:0046166">
    <property type="term" value="P:glyceraldehyde-3-phosphate biosynthetic process"/>
    <property type="evidence" value="ECO:0007669"/>
    <property type="project" value="TreeGrafter"/>
</dbReference>
<dbReference type="GO" id="GO:0019563">
    <property type="term" value="P:glycerol catabolic process"/>
    <property type="evidence" value="ECO:0007669"/>
    <property type="project" value="TreeGrafter"/>
</dbReference>
<dbReference type="GO" id="GO:0006096">
    <property type="term" value="P:glycolytic process"/>
    <property type="evidence" value="ECO:0007669"/>
    <property type="project" value="UniProtKB-UniRule"/>
</dbReference>
<dbReference type="CDD" id="cd00311">
    <property type="entry name" value="TIM"/>
    <property type="match status" value="1"/>
</dbReference>
<dbReference type="FunFam" id="3.20.20.70:FF:000016">
    <property type="entry name" value="Triosephosphate isomerase"/>
    <property type="match status" value="1"/>
</dbReference>
<dbReference type="Gene3D" id="3.20.20.70">
    <property type="entry name" value="Aldolase class I"/>
    <property type="match status" value="1"/>
</dbReference>
<dbReference type="HAMAP" id="MF_00147_B">
    <property type="entry name" value="TIM_B"/>
    <property type="match status" value="1"/>
</dbReference>
<dbReference type="InterPro" id="IPR013785">
    <property type="entry name" value="Aldolase_TIM"/>
</dbReference>
<dbReference type="InterPro" id="IPR035990">
    <property type="entry name" value="TIM_sf"/>
</dbReference>
<dbReference type="InterPro" id="IPR022896">
    <property type="entry name" value="TrioseP_Isoase_bac/euk"/>
</dbReference>
<dbReference type="InterPro" id="IPR000652">
    <property type="entry name" value="Triosephosphate_isomerase"/>
</dbReference>
<dbReference type="InterPro" id="IPR020861">
    <property type="entry name" value="Triosephosphate_isomerase_AS"/>
</dbReference>
<dbReference type="NCBIfam" id="TIGR00419">
    <property type="entry name" value="tim"/>
    <property type="match status" value="1"/>
</dbReference>
<dbReference type="PANTHER" id="PTHR21139">
    <property type="entry name" value="TRIOSEPHOSPHATE ISOMERASE"/>
    <property type="match status" value="1"/>
</dbReference>
<dbReference type="PANTHER" id="PTHR21139:SF42">
    <property type="entry name" value="TRIOSEPHOSPHATE ISOMERASE"/>
    <property type="match status" value="1"/>
</dbReference>
<dbReference type="Pfam" id="PF00121">
    <property type="entry name" value="TIM"/>
    <property type="match status" value="1"/>
</dbReference>
<dbReference type="SUPFAM" id="SSF51351">
    <property type="entry name" value="Triosephosphate isomerase (TIM)"/>
    <property type="match status" value="1"/>
</dbReference>
<dbReference type="PROSITE" id="PS00171">
    <property type="entry name" value="TIM_1"/>
    <property type="match status" value="1"/>
</dbReference>
<dbReference type="PROSITE" id="PS51440">
    <property type="entry name" value="TIM_2"/>
    <property type="match status" value="1"/>
</dbReference>
<sequence length="254" mass="27329">MERKSYVFGNWKMHKTAEEAKDFLSVFCPFVKEISPASIVGIAPSFTTLSACCESIKKMDSSIWLGAQNVHQDSSGAFTGEVSLPMLQEFHVNFVLLGHSECRHIFHEEDSTIALKVGAAARSGVVPVLCIGETLETRESGTTKDVLSNQLILGLAQLPETASVIIAYEPVWAIGTGKVASTADVQEVHAFCREVLSRIFSKEKSETISILYGGSVKADNAEGFARCPDVDGLLVGGASLDPQVFANVVGNFNL</sequence>
<evidence type="ECO:0000255" key="1">
    <source>
        <dbReference type="HAMAP-Rule" id="MF_00147"/>
    </source>
</evidence>
<gene>
    <name evidence="1" type="primary">tpiA</name>
    <name type="ordered locus">CF0695</name>
</gene>
<feature type="chain" id="PRO_0000307446" description="Triosephosphate isomerase">
    <location>
        <begin position="1"/>
        <end position="254"/>
    </location>
</feature>
<feature type="active site" description="Electrophile" evidence="1">
    <location>
        <position position="99"/>
    </location>
</feature>
<feature type="active site" description="Proton acceptor" evidence="1">
    <location>
        <position position="169"/>
    </location>
</feature>
<feature type="binding site" evidence="1">
    <location>
        <begin position="10"/>
        <end position="12"/>
    </location>
    <ligand>
        <name>substrate</name>
    </ligand>
</feature>
<feature type="binding site" evidence="1">
    <location>
        <position position="175"/>
    </location>
    <ligand>
        <name>substrate</name>
    </ligand>
</feature>
<feature type="binding site" evidence="1">
    <location>
        <position position="215"/>
    </location>
    <ligand>
        <name>substrate</name>
    </ligand>
</feature>
<feature type="binding site" evidence="1">
    <location>
        <begin position="236"/>
        <end position="237"/>
    </location>
    <ligand>
        <name>substrate</name>
    </ligand>
</feature>
<keyword id="KW-0963">Cytoplasm</keyword>
<keyword id="KW-0312">Gluconeogenesis</keyword>
<keyword id="KW-0324">Glycolysis</keyword>
<keyword id="KW-0413">Isomerase</keyword>
<accession>Q253S1</accession>
<reference key="1">
    <citation type="journal article" date="2006" name="DNA Res.">
        <title>Genome sequence of the cat pathogen, Chlamydophila felis.</title>
        <authorList>
            <person name="Azuma Y."/>
            <person name="Hirakawa H."/>
            <person name="Yamashita A."/>
            <person name="Cai Y."/>
            <person name="Rahman M.A."/>
            <person name="Suzuki H."/>
            <person name="Mitaku S."/>
            <person name="Toh H."/>
            <person name="Goto S."/>
            <person name="Murakami T."/>
            <person name="Sugi K."/>
            <person name="Hayashi H."/>
            <person name="Fukushi H."/>
            <person name="Hattori M."/>
            <person name="Kuhara S."/>
            <person name="Shirai M."/>
        </authorList>
    </citation>
    <scope>NUCLEOTIDE SEQUENCE [LARGE SCALE GENOMIC DNA]</scope>
    <source>
        <strain>Fe/C-56</strain>
    </source>
</reference>
<comment type="function">
    <text evidence="1">Involved in the gluconeogenesis. Catalyzes stereospecifically the conversion of dihydroxyacetone phosphate (DHAP) to D-glyceraldehyde-3-phosphate (G3P).</text>
</comment>
<comment type="catalytic activity">
    <reaction evidence="1">
        <text>D-glyceraldehyde 3-phosphate = dihydroxyacetone phosphate</text>
        <dbReference type="Rhea" id="RHEA:18585"/>
        <dbReference type="ChEBI" id="CHEBI:57642"/>
        <dbReference type="ChEBI" id="CHEBI:59776"/>
        <dbReference type="EC" id="5.3.1.1"/>
    </reaction>
</comment>
<comment type="pathway">
    <text evidence="1">Carbohydrate biosynthesis; gluconeogenesis.</text>
</comment>
<comment type="pathway">
    <text evidence="1">Carbohydrate degradation; glycolysis; D-glyceraldehyde 3-phosphate from glycerone phosphate: step 1/1.</text>
</comment>
<comment type="subunit">
    <text evidence="1">Homodimer.</text>
</comment>
<comment type="subcellular location">
    <subcellularLocation>
        <location evidence="1">Cytoplasm</location>
    </subcellularLocation>
</comment>
<comment type="similarity">
    <text evidence="1">Belongs to the triosephosphate isomerase family.</text>
</comment>
<protein>
    <recommendedName>
        <fullName evidence="1">Triosephosphate isomerase</fullName>
        <shortName evidence="1">TIM</shortName>
        <shortName evidence="1">TPI</shortName>
        <ecNumber evidence="1">5.3.1.1</ecNumber>
    </recommendedName>
    <alternativeName>
        <fullName evidence="1">Triose-phosphate isomerase</fullName>
    </alternativeName>
</protein>